<reference key="1">
    <citation type="journal article" date="1998" name="J. Gen. Virol.">
        <title>Ten distinct circular ssDNA components, four of which encode putative replication-associated proteins, are associated with the faba bean necrotic yellows virus genome.</title>
        <authorList>
            <person name="Katul L."/>
            <person name="Timchenko T."/>
            <person name="Gronenborn B."/>
            <person name="Vetten H.J."/>
        </authorList>
    </citation>
    <scope>NUCLEOTIDE SEQUENCE [GENOMIC DNA]</scope>
</reference>
<reference key="2">
    <citation type="journal article" date="1999" name="J. Virol.">
        <title>A single Rep protein initiates replication of multiple genome components of faba bean necrotic yellows virus, a single-stranded DNA virus of plants.</title>
        <authorList>
            <person name="Timchenko T."/>
            <person name="de Kouchkovsky F."/>
            <person name="Katul L."/>
            <person name="David C."/>
            <person name="Vetten H.J."/>
            <person name="Gronenborn B."/>
        </authorList>
    </citation>
    <scope>FUNCTION</scope>
</reference>
<reference key="3">
    <citation type="journal article" date="2004" name="Vet. Microbiol.">
        <title>Nanoviruses: genome organisation and protein function.</title>
        <authorList>
            <person name="Gronenborn B."/>
        </authorList>
    </citation>
    <scope>REVIEW</scope>
</reference>
<dbReference type="EC" id="2.7.7.-"/>
<dbReference type="EC" id="3.1.21.-"/>
<dbReference type="EC" id="3.6.1.-"/>
<dbReference type="EMBL" id="AJ132185">
    <property type="protein sequence ID" value="CAB44025.1"/>
    <property type="molecule type" value="Genomic_DNA"/>
</dbReference>
<dbReference type="EMBL" id="AJ005964">
    <property type="protein sequence ID" value="CAA06787.1"/>
    <property type="molecule type" value="Genomic_DNA"/>
</dbReference>
<dbReference type="SMR" id="Q9WIK0"/>
<dbReference type="KEGG" id="vg:993378"/>
<dbReference type="Proteomes" id="UP001508046">
    <property type="component" value="Segment"/>
</dbReference>
<dbReference type="GO" id="GO:0042025">
    <property type="term" value="C:host cell nucleus"/>
    <property type="evidence" value="ECO:0007669"/>
    <property type="project" value="UniProtKB-SubCell"/>
</dbReference>
<dbReference type="GO" id="GO:0005524">
    <property type="term" value="F:ATP binding"/>
    <property type="evidence" value="ECO:0007669"/>
    <property type="project" value="UniProtKB-KW"/>
</dbReference>
<dbReference type="GO" id="GO:0016887">
    <property type="term" value="F:ATP hydrolysis activity"/>
    <property type="evidence" value="ECO:0007669"/>
    <property type="project" value="RHEA"/>
</dbReference>
<dbReference type="GO" id="GO:0003677">
    <property type="term" value="F:DNA binding"/>
    <property type="evidence" value="ECO:0007669"/>
    <property type="project" value="UniProtKB-KW"/>
</dbReference>
<dbReference type="GO" id="GO:0004519">
    <property type="term" value="F:endonuclease activity"/>
    <property type="evidence" value="ECO:0007669"/>
    <property type="project" value="UniProtKB-KW"/>
</dbReference>
<dbReference type="GO" id="GO:0046872">
    <property type="term" value="F:metal ion binding"/>
    <property type="evidence" value="ECO:0007669"/>
    <property type="project" value="UniProtKB-KW"/>
</dbReference>
<dbReference type="GO" id="GO:0016779">
    <property type="term" value="F:nucleotidyltransferase activity"/>
    <property type="evidence" value="ECO:0007669"/>
    <property type="project" value="UniProtKB-KW"/>
</dbReference>
<dbReference type="GO" id="GO:0003723">
    <property type="term" value="F:RNA binding"/>
    <property type="evidence" value="ECO:0007669"/>
    <property type="project" value="InterPro"/>
</dbReference>
<dbReference type="GO" id="GO:0003724">
    <property type="term" value="F:RNA helicase activity"/>
    <property type="evidence" value="ECO:0007669"/>
    <property type="project" value="InterPro"/>
</dbReference>
<dbReference type="GO" id="GO:0006260">
    <property type="term" value="P:DNA replication"/>
    <property type="evidence" value="ECO:0007669"/>
    <property type="project" value="UniProtKB-KW"/>
</dbReference>
<dbReference type="Gene3D" id="3.40.1310.20">
    <property type="match status" value="1"/>
</dbReference>
<dbReference type="InterPro" id="IPR049912">
    <property type="entry name" value="CRESS_DNA_REP"/>
</dbReference>
<dbReference type="InterPro" id="IPR000605">
    <property type="entry name" value="Helicase_SF3_ssDNA/RNA_vir"/>
</dbReference>
<dbReference type="Pfam" id="PF00910">
    <property type="entry name" value="RNA_helicase"/>
    <property type="match status" value="1"/>
</dbReference>
<dbReference type="Pfam" id="PF02407">
    <property type="entry name" value="Viral_Rep"/>
    <property type="match status" value="1"/>
</dbReference>
<dbReference type="PROSITE" id="PS52020">
    <property type="entry name" value="CRESS_DNA_REP"/>
    <property type="match status" value="1"/>
</dbReference>
<protein>
    <recommendedName>
        <fullName>Para-Rep C7</fullName>
        <shortName>Rep7</shortName>
        <ecNumber>2.7.7.-</ecNumber>
        <ecNumber>3.1.21.-</ecNumber>
        <ecNumber>3.6.1.-</ecNumber>
    </recommendedName>
    <alternativeName>
        <fullName>ATP-dependent helicase C7</fullName>
    </alternativeName>
    <alternativeName>
        <fullName>Replication-associated protein of non-essential DNA C7</fullName>
    </alternativeName>
</protein>
<comment type="function">
    <text evidence="1 4">Initiates and terminates the replication only of its own subviral DNA molecule. The closed circular ssDNA genome is first converted to a superhelical dsDNA. Rep binds a specific hairpin at the genome origin of replication. Introduces an endonucleolytic nick within the intergenic region of the genome, thereby initiating the rolling circle replication (RCR). Following cleavage, binds covalently to the 5'-phosphate of DNA as a tyrosyl ester. The cleavage gives rise to a free 3'-OH that serves as a primer for the cellular DNA polymerase. The polymerase synthesizes the (+) strand DNA by rolling circle mechanism. After one round of replication, a Rep-catalyzed nucleotidyl transfer reaction releases a circular single-stranded virus genome, thereby terminating the replication. Displays origin-specific DNA cleavage, nucleotidyl transferase, ATPase and helicase activities (By similarity).</text>
</comment>
<comment type="catalytic activity">
    <reaction>
        <text>ATP + H2O = ADP + phosphate + H(+)</text>
        <dbReference type="Rhea" id="RHEA:13065"/>
        <dbReference type="ChEBI" id="CHEBI:15377"/>
        <dbReference type="ChEBI" id="CHEBI:15378"/>
        <dbReference type="ChEBI" id="CHEBI:30616"/>
        <dbReference type="ChEBI" id="CHEBI:43474"/>
        <dbReference type="ChEBI" id="CHEBI:456216"/>
    </reaction>
</comment>
<comment type="cofactor">
    <cofactor evidence="1">
        <name>Mg(2+)</name>
        <dbReference type="ChEBI" id="CHEBI:18420"/>
    </cofactor>
    <cofactor evidence="1">
        <name>Mn(2+)</name>
        <dbReference type="ChEBI" id="CHEBI:29035"/>
    </cofactor>
    <text evidence="1">Divalent metal cations, possibly Mg(2+) or Mn(2+).</text>
</comment>
<comment type="subunit">
    <text evidence="1 5">Homooligomer (Potential). Rep binds to repeated DNA motifs (iterons) (By similarity).</text>
</comment>
<comment type="subcellular location">
    <subcellularLocation>
        <location evidence="5">Host nucleus</location>
    </subcellularLocation>
</comment>
<comment type="domain">
    <text>There are 3 rolling circle replication (RCR) motifs. RCR-2 is probably involved in metal coordination. RCR-3 is required for phosphodiester bond cleavage for initiation of RCR.</text>
</comment>
<comment type="miscellaneous">
    <text>The genome of nanoviruses is composed of six to eight segments. In addition, some isolates contain subviral DNAs.</text>
</comment>
<comment type="similarity">
    <text evidence="5">Belongs to the nanoviridea/circoviridae replication-associated protein family.</text>
</comment>
<comment type="caution">
    <text evidence="5">This protein is encoded by a subviral DNA that is not present in all isolates of the virus.</text>
</comment>
<sequence>MPSIRATHWCFTLNFSGSIPEINWTADVQYSIWQHERVGHDHLQGYIQMNKHVTLKKMKELLPGAHLEMAKAPKKAIEYCQKKESAIAGPWEYGTWISSGSHKRKLMERFEDGPEEMKLEDPGLYRRCLSRVQMKKIRESCTWNFDLRPWQDELLKTIEQEPDDRTIIWVYGPHGGEGKSAFAKYLTLKEGWWYTAGGKATDMLYSYSLDPTCHVCIDIPRCTREEYINYSVIEQIKNRVIINTKYEPCTIRDDGHNVHVIVFCNFLPDVTRISEDRIKIINC</sequence>
<organism>
    <name type="scientific">Faba bean necrotic yellows C7 alphasatellite</name>
    <name type="common">FBNYC7A</name>
    <dbReference type="NCBI Taxonomy" id="1453082"/>
    <lineage>
        <taxon>Viruses</taxon>
        <taxon>Viruses incertae sedis</taxon>
        <taxon>Alphasatellitidae</taxon>
        <taxon>Nanoalphasatellitinae</taxon>
    </lineage>
</organism>
<evidence type="ECO:0000250" key="1"/>
<evidence type="ECO:0000255" key="2"/>
<evidence type="ECO:0000255" key="3">
    <source>
        <dbReference type="PROSITE-ProRule" id="PRU01364"/>
    </source>
</evidence>
<evidence type="ECO:0000269" key="4">
    <source>
    </source>
</evidence>
<evidence type="ECO:0000305" key="5"/>
<gene>
    <name type="primary">C7</name>
</gene>
<proteinExistence type="inferred from homology"/>
<feature type="chain" id="PRO_0000222441" description="Para-Rep C7">
    <location>
        <begin position="1"/>
        <end position="283"/>
    </location>
</feature>
<feature type="domain" description="CRESS-DNA virus Rep endonuclease" evidence="3">
    <location>
        <begin position="3"/>
        <end position="96"/>
    </location>
</feature>
<feature type="short sequence motif" description="RCR-1" evidence="3">
    <location>
        <begin position="10"/>
        <end position="13"/>
    </location>
</feature>
<feature type="short sequence motif" description="RCR-2" evidence="3">
    <location>
        <begin position="42"/>
        <end position="44"/>
    </location>
</feature>
<feature type="short sequence motif" description="Nuclear localization signal" evidence="2">
    <location>
        <begin position="51"/>
        <end position="71"/>
    </location>
</feature>
<feature type="short sequence motif" description="RCR-3" evidence="3">
    <location>
        <begin position="79"/>
        <end position="82"/>
    </location>
</feature>
<feature type="short sequence motif" description="Nuclear localization signal" evidence="2">
    <location>
        <begin position="96"/>
        <end position="102"/>
    </location>
</feature>
<feature type="active site" description="For DNA cleavage activity" evidence="3">
    <location>
        <position position="79"/>
    </location>
</feature>
<feature type="binding site" evidence="2">
    <location>
        <position position="36"/>
    </location>
    <ligand>
        <name>a divalent metal cation</name>
        <dbReference type="ChEBI" id="CHEBI:60240"/>
    </ligand>
</feature>
<feature type="binding site" evidence="2">
    <location>
        <position position="42"/>
    </location>
    <ligand>
        <name>a divalent metal cation</name>
        <dbReference type="ChEBI" id="CHEBI:60240"/>
    </ligand>
</feature>
<feature type="binding site" evidence="2">
    <location>
        <position position="84"/>
    </location>
    <ligand>
        <name>a divalent metal cation</name>
        <dbReference type="ChEBI" id="CHEBI:60240"/>
    </ligand>
</feature>
<feature type="binding site" evidence="1">
    <location>
        <begin position="178"/>
        <end position="180"/>
    </location>
    <ligand>
        <name>ATP</name>
        <dbReference type="ChEBI" id="CHEBI:30616"/>
    </ligand>
</feature>
<feature type="sequence variant" evidence="5">
    <original>N</original>
    <variation>K</variation>
    <location>
        <position position="50"/>
    </location>
</feature>
<feature type="sequence variant" evidence="5">
    <original>T</original>
    <variation>S</variation>
    <location>
        <position position="54"/>
    </location>
</feature>
<feature type="sequence variant" evidence="5">
    <original>G</original>
    <variation>D</variation>
    <location>
        <position position="113"/>
    </location>
</feature>
<name>REP7_FBNC7</name>
<accession>Q9WIK0</accession>
<accession>O91250</accession>
<keyword id="KW-0067">ATP-binding</keyword>
<keyword id="KW-0190">Covalent protein-DNA linkage</keyword>
<keyword id="KW-0235">DNA replication</keyword>
<keyword id="KW-0238">DNA-binding</keyword>
<keyword id="KW-0255">Endonuclease</keyword>
<keyword id="KW-0347">Helicase</keyword>
<keyword id="KW-1048">Host nucleus</keyword>
<keyword id="KW-0378">Hydrolase</keyword>
<keyword id="KW-0479">Metal-binding</keyword>
<keyword id="KW-0511">Multifunctional enzyme</keyword>
<keyword id="KW-0540">Nuclease</keyword>
<keyword id="KW-0547">Nucleotide-binding</keyword>
<keyword id="KW-0548">Nucleotidyltransferase</keyword>
<keyword id="KW-0808">Transferase</keyword>